<feature type="chain" id="PRO_0000367517" description="Ataxin-7-like protein 3">
    <location>
        <begin position="1"/>
        <end position="367"/>
    </location>
</feature>
<feature type="domain" description="SCA7" evidence="2">
    <location>
        <begin position="199"/>
        <end position="266"/>
    </location>
</feature>
<feature type="zinc finger region" description="SGF11-type" evidence="2">
    <location>
        <begin position="84"/>
        <end position="105"/>
    </location>
</feature>
<feature type="region of interest" description="Disordered" evidence="3">
    <location>
        <begin position="116"/>
        <end position="184"/>
    </location>
</feature>
<feature type="region of interest" description="Disordered" evidence="3">
    <location>
        <begin position="280"/>
        <end position="367"/>
    </location>
</feature>
<feature type="compositionally biased region" description="Low complexity" evidence="3">
    <location>
        <begin position="116"/>
        <end position="125"/>
    </location>
</feature>
<feature type="compositionally biased region" description="Acidic residues" evidence="3">
    <location>
        <begin position="132"/>
        <end position="141"/>
    </location>
</feature>
<feature type="compositionally biased region" description="Low complexity" evidence="3">
    <location>
        <begin position="280"/>
        <end position="299"/>
    </location>
</feature>
<feature type="compositionally biased region" description="Basic and acidic residues" evidence="3">
    <location>
        <begin position="318"/>
        <end position="329"/>
    </location>
</feature>
<feature type="compositionally biased region" description="Low complexity" evidence="3">
    <location>
        <begin position="330"/>
        <end position="346"/>
    </location>
</feature>
<feature type="sequence conflict" description="In Ref. 2; AAI15133." evidence="4" ref="2">
    <original>V</original>
    <variation>I</variation>
    <location>
        <position position="85"/>
    </location>
</feature>
<gene>
    <name type="primary">atxn7l3</name>
    <name type="ORF">si:dz180g5.4</name>
    <name type="ORF">zgc:136438</name>
    <name type="ORF">zgc:158566</name>
</gene>
<evidence type="ECO:0000250" key="1"/>
<evidence type="ECO:0000255" key="2">
    <source>
        <dbReference type="HAMAP-Rule" id="MF_03047"/>
    </source>
</evidence>
<evidence type="ECO:0000256" key="3">
    <source>
        <dbReference type="SAM" id="MobiDB-lite"/>
    </source>
</evidence>
<evidence type="ECO:0000305" key="4"/>
<reference key="1">
    <citation type="journal article" date="2013" name="Nature">
        <title>The zebrafish reference genome sequence and its relationship to the human genome.</title>
        <authorList>
            <person name="Howe K."/>
            <person name="Clark M.D."/>
            <person name="Torroja C.F."/>
            <person name="Torrance J."/>
            <person name="Berthelot C."/>
            <person name="Muffato M."/>
            <person name="Collins J.E."/>
            <person name="Humphray S."/>
            <person name="McLaren K."/>
            <person name="Matthews L."/>
            <person name="McLaren S."/>
            <person name="Sealy I."/>
            <person name="Caccamo M."/>
            <person name="Churcher C."/>
            <person name="Scott C."/>
            <person name="Barrett J.C."/>
            <person name="Koch R."/>
            <person name="Rauch G.J."/>
            <person name="White S."/>
            <person name="Chow W."/>
            <person name="Kilian B."/>
            <person name="Quintais L.T."/>
            <person name="Guerra-Assuncao J.A."/>
            <person name="Zhou Y."/>
            <person name="Gu Y."/>
            <person name="Yen J."/>
            <person name="Vogel J.H."/>
            <person name="Eyre T."/>
            <person name="Redmond S."/>
            <person name="Banerjee R."/>
            <person name="Chi J."/>
            <person name="Fu B."/>
            <person name="Langley E."/>
            <person name="Maguire S.F."/>
            <person name="Laird G.K."/>
            <person name="Lloyd D."/>
            <person name="Kenyon E."/>
            <person name="Donaldson S."/>
            <person name="Sehra H."/>
            <person name="Almeida-King J."/>
            <person name="Loveland J."/>
            <person name="Trevanion S."/>
            <person name="Jones M."/>
            <person name="Quail M."/>
            <person name="Willey D."/>
            <person name="Hunt A."/>
            <person name="Burton J."/>
            <person name="Sims S."/>
            <person name="McLay K."/>
            <person name="Plumb B."/>
            <person name="Davis J."/>
            <person name="Clee C."/>
            <person name="Oliver K."/>
            <person name="Clark R."/>
            <person name="Riddle C."/>
            <person name="Elliot D."/>
            <person name="Threadgold G."/>
            <person name="Harden G."/>
            <person name="Ware D."/>
            <person name="Begum S."/>
            <person name="Mortimore B."/>
            <person name="Kerry G."/>
            <person name="Heath P."/>
            <person name="Phillimore B."/>
            <person name="Tracey A."/>
            <person name="Corby N."/>
            <person name="Dunn M."/>
            <person name="Johnson C."/>
            <person name="Wood J."/>
            <person name="Clark S."/>
            <person name="Pelan S."/>
            <person name="Griffiths G."/>
            <person name="Smith M."/>
            <person name="Glithero R."/>
            <person name="Howden P."/>
            <person name="Barker N."/>
            <person name="Lloyd C."/>
            <person name="Stevens C."/>
            <person name="Harley J."/>
            <person name="Holt K."/>
            <person name="Panagiotidis G."/>
            <person name="Lovell J."/>
            <person name="Beasley H."/>
            <person name="Henderson C."/>
            <person name="Gordon D."/>
            <person name="Auger K."/>
            <person name="Wright D."/>
            <person name="Collins J."/>
            <person name="Raisen C."/>
            <person name="Dyer L."/>
            <person name="Leung K."/>
            <person name="Robertson L."/>
            <person name="Ambridge K."/>
            <person name="Leongamornlert D."/>
            <person name="McGuire S."/>
            <person name="Gilderthorp R."/>
            <person name="Griffiths C."/>
            <person name="Manthravadi D."/>
            <person name="Nichol S."/>
            <person name="Barker G."/>
            <person name="Whitehead S."/>
            <person name="Kay M."/>
            <person name="Brown J."/>
            <person name="Murnane C."/>
            <person name="Gray E."/>
            <person name="Humphries M."/>
            <person name="Sycamore N."/>
            <person name="Barker D."/>
            <person name="Saunders D."/>
            <person name="Wallis J."/>
            <person name="Babbage A."/>
            <person name="Hammond S."/>
            <person name="Mashreghi-Mohammadi M."/>
            <person name="Barr L."/>
            <person name="Martin S."/>
            <person name="Wray P."/>
            <person name="Ellington A."/>
            <person name="Matthews N."/>
            <person name="Ellwood M."/>
            <person name="Woodmansey R."/>
            <person name="Clark G."/>
            <person name="Cooper J."/>
            <person name="Tromans A."/>
            <person name="Grafham D."/>
            <person name="Skuce C."/>
            <person name="Pandian R."/>
            <person name="Andrews R."/>
            <person name="Harrison E."/>
            <person name="Kimberley A."/>
            <person name="Garnett J."/>
            <person name="Fosker N."/>
            <person name="Hall R."/>
            <person name="Garner P."/>
            <person name="Kelly D."/>
            <person name="Bird C."/>
            <person name="Palmer S."/>
            <person name="Gehring I."/>
            <person name="Berger A."/>
            <person name="Dooley C.M."/>
            <person name="Ersan-Urun Z."/>
            <person name="Eser C."/>
            <person name="Geiger H."/>
            <person name="Geisler M."/>
            <person name="Karotki L."/>
            <person name="Kirn A."/>
            <person name="Konantz J."/>
            <person name="Konantz M."/>
            <person name="Oberlander M."/>
            <person name="Rudolph-Geiger S."/>
            <person name="Teucke M."/>
            <person name="Lanz C."/>
            <person name="Raddatz G."/>
            <person name="Osoegawa K."/>
            <person name="Zhu B."/>
            <person name="Rapp A."/>
            <person name="Widaa S."/>
            <person name="Langford C."/>
            <person name="Yang F."/>
            <person name="Schuster S.C."/>
            <person name="Carter N.P."/>
            <person name="Harrow J."/>
            <person name="Ning Z."/>
            <person name="Herrero J."/>
            <person name="Searle S.M."/>
            <person name="Enright A."/>
            <person name="Geisler R."/>
            <person name="Plasterk R.H."/>
            <person name="Lee C."/>
            <person name="Westerfield M."/>
            <person name="de Jong P.J."/>
            <person name="Zon L.I."/>
            <person name="Postlethwait J.H."/>
            <person name="Nusslein-Volhard C."/>
            <person name="Hubbard T.J."/>
            <person name="Roest Crollius H."/>
            <person name="Rogers J."/>
            <person name="Stemple D.L."/>
        </authorList>
    </citation>
    <scope>NUCLEOTIDE SEQUENCE [LARGE SCALE GENOMIC DNA]</scope>
    <source>
        <strain>Tuebingen</strain>
    </source>
</reference>
<reference key="2">
    <citation type="submission" date="2006-12" db="EMBL/GenBank/DDBJ databases">
        <authorList>
            <consortium name="NIH - Zebrafish Gene Collection (ZGC) project"/>
        </authorList>
    </citation>
    <scope>NUCLEOTIDE SEQUENCE [LARGE SCALE MRNA]</scope>
    <source>
        <strain>AB</strain>
        <tissue>Ovary</tissue>
    </source>
</reference>
<keyword id="KW-0010">Activator</keyword>
<keyword id="KW-0156">Chromatin regulator</keyword>
<keyword id="KW-0479">Metal-binding</keyword>
<keyword id="KW-0539">Nucleus</keyword>
<keyword id="KW-1185">Reference proteome</keyword>
<keyword id="KW-0804">Transcription</keyword>
<keyword id="KW-0805">Transcription regulation</keyword>
<keyword id="KW-0862">Zinc</keyword>
<keyword id="KW-0863">Zinc-finger</keyword>
<proteinExistence type="evidence at transcript level"/>
<name>AT7L3_DANRE</name>
<dbReference type="EMBL" id="AL604064">
    <property type="protein sequence ID" value="CAD43430.2"/>
    <property type="status" value="ALT_SEQ"/>
    <property type="molecule type" value="Genomic_DNA"/>
</dbReference>
<dbReference type="EMBL" id="BC115132">
    <property type="protein sequence ID" value="AAI15133.1"/>
    <property type="molecule type" value="mRNA"/>
</dbReference>
<dbReference type="EMBL" id="BC129298">
    <property type="protein sequence ID" value="AAI29299.1"/>
    <property type="molecule type" value="mRNA"/>
</dbReference>
<dbReference type="RefSeq" id="NP_001005396.1">
    <property type="nucleotide sequence ID" value="NM_001005396.1"/>
</dbReference>
<dbReference type="RefSeq" id="NP_001035431.2">
    <property type="nucleotide sequence ID" value="NM_001040341.2"/>
</dbReference>
<dbReference type="SMR" id="A1L209"/>
<dbReference type="FunCoup" id="A1L209">
    <property type="interactions" value="1910"/>
</dbReference>
<dbReference type="STRING" id="7955.ENSDARP00000094893"/>
<dbReference type="PaxDb" id="7955-ENSDARP00000094893"/>
<dbReference type="GeneID" id="368510"/>
<dbReference type="KEGG" id="dre:368510"/>
<dbReference type="AGR" id="ZFIN:ZDB-GENE-030616-253"/>
<dbReference type="CTD" id="368510"/>
<dbReference type="ZFIN" id="ZDB-GENE-030616-253">
    <property type="gene designation" value="atxn7l3a"/>
</dbReference>
<dbReference type="eggNOG" id="ENOG502QTTX">
    <property type="taxonomic scope" value="Eukaryota"/>
</dbReference>
<dbReference type="InParanoid" id="A1L209"/>
<dbReference type="OrthoDB" id="21557at2759"/>
<dbReference type="PhylomeDB" id="A1L209"/>
<dbReference type="PRO" id="PR:A1L209"/>
<dbReference type="Proteomes" id="UP000000437">
    <property type="component" value="Chromosome 3"/>
</dbReference>
<dbReference type="GO" id="GO:0071819">
    <property type="term" value="C:DUBm complex"/>
    <property type="evidence" value="ECO:0000318"/>
    <property type="project" value="GO_Central"/>
</dbReference>
<dbReference type="GO" id="GO:0000124">
    <property type="term" value="C:SAGA complex"/>
    <property type="evidence" value="ECO:0000250"/>
    <property type="project" value="UniProtKB"/>
</dbReference>
<dbReference type="GO" id="GO:0003713">
    <property type="term" value="F:transcription coactivator activity"/>
    <property type="evidence" value="ECO:0000250"/>
    <property type="project" value="UniProtKB"/>
</dbReference>
<dbReference type="GO" id="GO:0008270">
    <property type="term" value="F:zinc ion binding"/>
    <property type="evidence" value="ECO:0007669"/>
    <property type="project" value="UniProtKB-UniRule"/>
</dbReference>
<dbReference type="GO" id="GO:0006325">
    <property type="term" value="P:chromatin organization"/>
    <property type="evidence" value="ECO:0007669"/>
    <property type="project" value="UniProtKB-KW"/>
</dbReference>
<dbReference type="GO" id="GO:0045893">
    <property type="term" value="P:positive regulation of DNA-templated transcription"/>
    <property type="evidence" value="ECO:0000250"/>
    <property type="project" value="UniProtKB"/>
</dbReference>
<dbReference type="GO" id="GO:0006357">
    <property type="term" value="P:regulation of transcription by RNA polymerase II"/>
    <property type="evidence" value="ECO:0000318"/>
    <property type="project" value="GO_Central"/>
</dbReference>
<dbReference type="FunFam" id="3.30.160.60:FF:000118">
    <property type="entry name" value="Ataxin-7-like protein 3"/>
    <property type="match status" value="1"/>
</dbReference>
<dbReference type="Gene3D" id="6.10.140.1270">
    <property type="match status" value="1"/>
</dbReference>
<dbReference type="Gene3D" id="3.30.160.60">
    <property type="entry name" value="Classic Zinc Finger"/>
    <property type="match status" value="1"/>
</dbReference>
<dbReference type="HAMAP" id="MF_03047">
    <property type="entry name" value="Sgf11"/>
    <property type="match status" value="1"/>
</dbReference>
<dbReference type="InterPro" id="IPR013246">
    <property type="entry name" value="SAGA_su_Sgf11"/>
</dbReference>
<dbReference type="InterPro" id="IPR013243">
    <property type="entry name" value="SCA7_dom"/>
</dbReference>
<dbReference type="InterPro" id="IPR051078">
    <property type="entry name" value="SGF11"/>
</dbReference>
<dbReference type="PANTHER" id="PTHR46367">
    <property type="entry name" value="ATAXIN-7-LIKE PROTEIN 3"/>
    <property type="match status" value="1"/>
</dbReference>
<dbReference type="PANTHER" id="PTHR46367:SF1">
    <property type="entry name" value="ATAXIN-7-LIKE PROTEIN 3"/>
    <property type="match status" value="1"/>
</dbReference>
<dbReference type="Pfam" id="PF08313">
    <property type="entry name" value="SCA7"/>
    <property type="match status" value="1"/>
</dbReference>
<dbReference type="Pfam" id="PF08209">
    <property type="entry name" value="Sgf11"/>
    <property type="match status" value="1"/>
</dbReference>
<dbReference type="PROSITE" id="PS51505">
    <property type="entry name" value="SCA7"/>
    <property type="match status" value="1"/>
</dbReference>
<comment type="function">
    <text evidence="2">Component of the transcription regulatory histone acetylation (HAT) complex SAGA, a multiprotein complex that activates transcription by remodeling chromatin and mediating histone acetylation and deubiquitination. Within the SAGA complex, participates in a subcomplex that specifically deubiquitinates histone H2B. The SAGA complex is recruited to specific gene promoters by activators, where it is required for transcription.</text>
</comment>
<comment type="subunit">
    <text evidence="1">Component of some SAGA transcription coactivator-HAT complexes. Within the SAGA complex, participates in a subcomplex of SAGA called the DUB module (deubiquitination module) (By similarity).</text>
</comment>
<comment type="subcellular location">
    <subcellularLocation>
        <location evidence="2">Nucleus</location>
    </subcellularLocation>
</comment>
<comment type="domain">
    <text evidence="2">The long N-terminal helix forms part of the 'assembly lobe' of the SAGA deubiquitination module.</text>
</comment>
<comment type="domain">
    <text evidence="2">The C-terminal SGF11-type zinc-finger domain forms part of the 'catalytic lobe' of the SAGA deubiquitination module.</text>
</comment>
<comment type="similarity">
    <text evidence="2">Belongs to the SGF11 family.</text>
</comment>
<comment type="sequence caution" evidence="4">
    <conflict type="erroneous gene model prediction">
        <sequence resource="EMBL-CDS" id="CAD43430"/>
    </conflict>
</comment>
<accession>A1L209</accession>
<accession>Q1RM53</accession>
<accession>Q8JFU1</accession>
<organism>
    <name type="scientific">Danio rerio</name>
    <name type="common">Zebrafish</name>
    <name type="synonym">Brachydanio rerio</name>
    <dbReference type="NCBI Taxonomy" id="7955"/>
    <lineage>
        <taxon>Eukaryota</taxon>
        <taxon>Metazoa</taxon>
        <taxon>Chordata</taxon>
        <taxon>Craniata</taxon>
        <taxon>Vertebrata</taxon>
        <taxon>Euteleostomi</taxon>
        <taxon>Actinopterygii</taxon>
        <taxon>Neopterygii</taxon>
        <taxon>Teleostei</taxon>
        <taxon>Ostariophysi</taxon>
        <taxon>Cypriniformes</taxon>
        <taxon>Danionidae</taxon>
        <taxon>Danioninae</taxon>
        <taxon>Danio</taxon>
    </lineage>
</organism>
<sequence length="367" mass="40720">MKMEDMSLSGLDNTKLEALAHDVYSDLVEDACLGLCFEVHRAVKQGYFFLDETDQESMKDFEIVDQPGVDIFGQVYNQWKNKECVCPNCSRSIAASRFAPHLEKCLGMGRNSSRIANRRIASSNNTSKSESDQEDNDDINDNDWSYGSEKKAKKRKSEKNPNSPRRSKSLKHKNGELSGSVNPDMYKYNYSSGISYETLGPEELRSILTTQCGVVSEHTKKMCTRSQRCPQHTDEQRRAVRVFLLGPSASTLPDADTMLENEAYEPPDGQLIMSRLHWDASSDISPSDSASSKASTNNSESKRPKKKKPSTLSLTPAGERDKAQERDRIAGSGSSGSSSQNALGLSSRKKRPKLAVPPAPSIYDDLN</sequence>
<protein>
    <recommendedName>
        <fullName evidence="2">Ataxin-7-like protein 3</fullName>
    </recommendedName>
    <alternativeName>
        <fullName evidence="2">SAGA-associated factor 11 homolog</fullName>
    </alternativeName>
</protein>